<keyword id="KW-0012">Acyltransferase</keyword>
<keyword id="KW-0489">Methyltransferase</keyword>
<keyword id="KW-0511">Multifunctional enzyme</keyword>
<keyword id="KW-0521">NADP</keyword>
<keyword id="KW-0596">Phosphopantetheine</keyword>
<keyword id="KW-0597">Phosphoprotein</keyword>
<keyword id="KW-1185">Reference proteome</keyword>
<keyword id="KW-0808">Transferase</keyword>
<evidence type="ECO:0000250" key="1">
    <source>
        <dbReference type="UniProtKB" id="A0A0K0MCJ4"/>
    </source>
</evidence>
<evidence type="ECO:0000250" key="2">
    <source>
        <dbReference type="UniProtKB" id="B6HNK3"/>
    </source>
</evidence>
<evidence type="ECO:0000255" key="3"/>
<evidence type="ECO:0000255" key="4">
    <source>
        <dbReference type="PROSITE-ProRule" id="PRU00258"/>
    </source>
</evidence>
<evidence type="ECO:0000255" key="5">
    <source>
        <dbReference type="PROSITE-ProRule" id="PRU01348"/>
    </source>
</evidence>
<evidence type="ECO:0000255" key="6">
    <source>
        <dbReference type="PROSITE-ProRule" id="PRU01363"/>
    </source>
</evidence>
<evidence type="ECO:0000256" key="7">
    <source>
        <dbReference type="SAM" id="MobiDB-lite"/>
    </source>
</evidence>
<evidence type="ECO:0000269" key="8">
    <source>
    </source>
</evidence>
<evidence type="ECO:0000269" key="9">
    <source>
    </source>
</evidence>
<evidence type="ECO:0000303" key="10">
    <source>
    </source>
</evidence>
<evidence type="ECO:0000305" key="11"/>
<evidence type="ECO:0000305" key="12">
    <source>
    </source>
</evidence>
<gene>
    <name evidence="10" type="primary">sor2</name>
    <name type="ORF">TRIREDRAFT_73621</name>
</gene>
<sequence length="2633" mass="288715">MAASSTRTLLMFGPGAMSLNETYFASILSFISTDSASQWALSAVRDIESHWPSLCEAIPKLQHTSGVSNAQKLAEWLRTGTLAPGSTIASLPNAILGPLVVIAQLVEYLRHVDSLSESGLRGGEGFQVPSAPDAETVGCCLGTFSALVVSSSSSWAQFCHNASAVVRIVFVLGALSDAQDATDASGPSVSLIAFWRGGQSLSDLKKALEKFPEAYISVLYDENRVTVTTSTRTVAALKNHLQTVGITTNETEFHGRFHAAQLYQTELEAFLAYCRRFPTFQLPDSSCIVVPTRVNSENVVTSQESLLEISCRAFLVSQFDWIKTFRAAVSSTLQNRASRIIEFGPERCVPPTLLRRLNSQVTHFDFEESIKRAKASLSHDQELPAGVAENDIAVIGMACKVAGADDVNEYWELLLQGKSQHRELIPNDRFVMETPFRPFEAGDDKKKWFGNFIGDHDAFDYKFFKKSPREALHMDPQQRLMLQAAYQAVAQSGYYNANLNVHGPTKVGCYIGVVANDYENNISHTTPIAFSATGALRSYIAGKVSHFFGWTGPAMTVDTACSASTVALDLACKAILSGECSAALVGGTNFFSTPMFFQNLAAGSFLSTTGQCKPFDAKADGYCRGEAVGTVFLKKLSQAIADGDQVLGVISATAINQNRNETPIFVPNSPSLTNVFRTAIEKSGLDAKDISVVEAHGTGTPVGDPVEYDSIRQVFGGAVRAGQDALQVGSVKGLVGHTEGASGVVALVKILLMLQRGQIPPQASFETINPSIKYSPSDNLEITKTPLPWNQEFKAALINNYGAAGSNASVIIKQGPAQLLRRLPPVVDSETEALLSKVGADDAQKAPFFISGLDEKAILAYAQKLRQFIYSHSNLDIQDLAFSVNRQSNWSLGRGAVFSAGSIAELDEKLASIETFPVPSSQPPVILCFGGQVSTFVGLDYQLFAKSAILRRHLDQCDAACKSIGAGSIYPRIFQSDPIDDPSVLQPLLFSLQYSCAMSWIDCGIVPAKLVGHSFGELTALCISGVVSLQDGLKLVYGRSKIIKESWGAERGAMLAVEADLEELESLLTTVNSSLQEGRATIACFNGPRSFTVAGSSAAIDAVQQAISNTQPVLKHKRLNVTNAFHSVLVERLKPDLEALGRQLTFALPQIPLERATRSREDHGLSPSYVANHMREPVYFHHAVERIAKEYPEAIWLEAGSNSTITTMASKALGLPKASTFQPVNVTNNSKASSQLSDVTMNLWKAGLRITFWPHSRAQTYEYKHIILPPYQFEKHRQWLEFKPPQALQVVVQTDSSTDARNGTTEPQPVGLYTLLDRGQDKYRFRVNTAAGQFVDAMSDHAIGKAQTLPAMFGVDLAIEALLSIHPELGDTSRFDPQIYNVVNQEYIHDSSRALFVLFERLGQDENSWAFELTSKGKDGAESLHMSGQLHFQASDDARSRLEFSRLDRFITHDRCLQVLESSGRSDEVIQGQTIYSVLSSSDVNYGQRLRGLQRLVGRSNESAGRLVRRRSGKLFVDFALGEVFTQVGSIWANCMAQHQRNTRNKGIYMATGLEQWSKSPKVLQKFNQGLYDNDPEIEWHVLAQHKRNTSDDSFTTDIFVFDAASGDLEEVILGIKYAPVSLDQLFSGSAIATATTPVANGYVPLTTPFVPVPTTTKQAAVPQPQHVAKKAAPRAAPKRDIKEELWLRLRPVLADISGLEPEEIQPTDALADIGIDSLMGMEMAREVETTFNCTVEQSELLSIVDVPGILKFLQSTLGDEDVHDSSETMSTVSSDGNVHSPPTSGSEMASPNLKVSYGSAYGSSDLPISAVLEAFGESSAKTDQFLKTYGCAGYLDGVSQKQTRLCLVLTSAAFKQLGCDLEAAKPGEVLQPVPFVERHRRFHQYLYSMLEETRIINIDGDVITRTAIPLPSQSADAILQDLMRRHADNGSSHQLAYNVGSRMADVLSGKADGPQLIFGDAKNRELVANFYGELPFNKLYFELMADFLTRLANKLKLSSSRSGTPTLKILEMGAGTGGTTKVLLPILAKLGIPLEYTFTDLSPSLVAQAKRRFKEYPFMKFAVHDIEQPPSDPELVGSQHVVIASNAVHATHSLRDSARNIHKFLRPDGFLMLLEMMRTLHWVDVVWGTLEGWWLFDDGRTHAIVNEQRWEKELLASGFKHVRWTDGKLPEVHVQRVIIALAGDGDGDVSDIPALTSPALKDEEDHGSKLDGEERKRVANAYVESTIRDFAIPSYTGPILSTAPGAGACVLVTGATGSLGSHLVAHIAGLPSVDTIYCLNRPRPGKKGQEDQSRDPLSRLTEVLASKSIQLSEAEISKLRVIETDLPLPQFGLDEIQYEQLLNNVTHIVHSAFPVNGLRSLKQNEPQFTLMRNLVDLAAGVSARRPTEFKFTFQFISSLSAVGMYPKVHGEKRVPEQQWDVDSALPNGYGEAKVICERVLLETLGQHPDRFRAMTVRLGQLSGSMKTGYWNHMEMLSFLFKSAQTLRALPDVDGDVSWLHLEDASASLADLLLRDAPTCHAVYHLDNPRPRDWKDVIPVLADALDIPSSHIVPFEEWLRRVRAYPGEDPWDNPSAKAMDFFEHKFKHMSCGGVTMATDHALEHSETLRAVQPVSDELVRKYIQAWKDSGFLR</sequence>
<proteinExistence type="evidence at transcript level"/>
<organism>
    <name type="scientific">Hypocrea jecorina (strain QM6a)</name>
    <name type="common">Trichoderma reesei</name>
    <dbReference type="NCBI Taxonomy" id="431241"/>
    <lineage>
        <taxon>Eukaryota</taxon>
        <taxon>Fungi</taxon>
        <taxon>Dikarya</taxon>
        <taxon>Ascomycota</taxon>
        <taxon>Pezizomycotina</taxon>
        <taxon>Sordariomycetes</taxon>
        <taxon>Hypocreomycetidae</taxon>
        <taxon>Hypocreales</taxon>
        <taxon>Hypocreaceae</taxon>
        <taxon>Trichoderma</taxon>
    </lineage>
</organism>
<accession>G0R6S9</accession>
<comment type="function">
    <text evidence="2 8 9">Non-reducing polyketide synthase; part of the SOR gene cluster that mediates the biosynthesis of sorbicillinoids, a diverse group of yellow secondary metabolites that restrict growth of competing pathogenic fungi but not of bacteria (PubMed:29104566). Sorbicillinoids biosynthesis requires the action of two PKSs (PubMed:28809958). The SOR cluster is required for the production of trichodimerol and dihydrotrichotetronin, with sor2 being sufficient for production of trichodimerol, but not dihydrotrichotetronin in the light (PubMed:28809958). Sor1 iteratively combines three acetyl units and the growing chain is modified by the ketoacyl reductase subunit, and optional by the enoyl reductase subunit in the second cycle (By similarity). The polyketide is then handed over to the PKS sor2, which adds three more acetyl units, and two methyl groups (By similarity). Sor2 releases an aldehyde, which undergoes spontaneous cyclization resulting in the formation of sorbicillin or 2',3'-dihydrosorbicillin (By similarity). The monooxygenase sor5 oxidizes sorbicillin and 2',3'-dihydrosorbicillin to 2',3'-dihydrosorbicillinol and sorbicillinol, respectively (PubMed:29104566). The oxidoreductase sor8 further converts sorbicillinol into oxosorbicillinol (PubMed:29104566). Sorbicillinol is the building block for the other sorbicillinoids such as disorbicillinol, bisvertinolon, dihydrobisvertinolone, and dihydrotrichotetronine (PubMed:28809958, PubMed:29104566).</text>
</comment>
<comment type="cofactor">
    <cofactor evidence="3">
        <name>pantetheine 4'-phosphate</name>
        <dbReference type="ChEBI" id="CHEBI:47942"/>
    </cofactor>
    <text evidence="3">Binds 1 phosphopantetheine covalently.</text>
</comment>
<comment type="pathway">
    <text evidence="8">Secondary metabolite biosynthesis.</text>
</comment>
<comment type="induction">
    <text evidence="8">The promoter contains putative CRE1 binding motifs 5'-SYGGRG-3' and expression is differentially regulated in light and darkness by CRE1 (PubMed:28809958). Photoreceptors BLR1 and BLR2 negatively regulate the expression, while ENV1 exerts positive regulation (PubMed:28809958). Moreover the SOR biosynthetic genes show a mechanism of positive feedback on each other in darkness (PubMed:28809958).</text>
</comment>
<comment type="domain">
    <text evidence="12">Multidomain protein; including an N-terminal starter unit:ACP transacylase (SAT) domain, a beta-ketoacyl synthase (KS) domain, a malonyl-CoA:ACP transacylase (MAT) domain, a product template domain, a acyl carrier protein (ACP) domain, a methyltransferase domain and a reductive NADPH-binding domain that is required for NADPH-dependent product release.</text>
</comment>
<comment type="disruption phenotype">
    <text evidence="8">Abolishes production of trichodimerol and dihydrotrichotetronin in darkness (PubMed:28809958). Also impacts production of paracelsin in a light dependent manner, with decreased paracelsin levels in light, but likely in an indirect way (PubMed:28809958). Also results in a positive trend for cbh1 transcript levels and increased specific cellulase activity (PubMed:28809958).</text>
</comment>
<feature type="chain" id="PRO_0000443837" description="Non-reducing polyketide synthase sor2">
    <location>
        <begin position="1"/>
        <end position="2633"/>
    </location>
</feature>
<feature type="domain" description="Ketosynthase family 3 (KS3)" evidence="5">
    <location>
        <begin position="389"/>
        <end position="814"/>
    </location>
</feature>
<feature type="domain" description="PKS/mFAS DH" evidence="6">
    <location>
        <begin position="1307"/>
        <end position="1627"/>
    </location>
</feature>
<feature type="domain" description="Carrier" evidence="4">
    <location>
        <begin position="1684"/>
        <end position="1758"/>
    </location>
</feature>
<feature type="region of interest" description="N-terminal acylcarrier protein transacylase domain (SAT)" evidence="1">
    <location>
        <begin position="67"/>
        <end position="237"/>
    </location>
</feature>
<feature type="region of interest" description="Malonyl-CoA:ACP transacylase (MAT) domain" evidence="3">
    <location>
        <begin position="928"/>
        <end position="1239"/>
    </location>
</feature>
<feature type="region of interest" description="N-terminal hotdog fold" evidence="6">
    <location>
        <begin position="1307"/>
        <end position="1437"/>
    </location>
</feature>
<feature type="region of interest" description="Product template (PT) domain" evidence="3">
    <location>
        <begin position="1338"/>
        <end position="1509"/>
    </location>
</feature>
<feature type="region of interest" description="C-terminal hotdog fold" evidence="6">
    <location>
        <begin position="1464"/>
        <end position="1627"/>
    </location>
</feature>
<feature type="region of interest" description="Disordered" evidence="7">
    <location>
        <begin position="1762"/>
        <end position="1792"/>
    </location>
</feature>
<feature type="region of interest" description="Methyltransferase domain" evidence="3">
    <location>
        <begin position="1982"/>
        <end position="2166"/>
    </location>
</feature>
<feature type="region of interest" description="NADPH-binding (R) domain" evidence="3">
    <location>
        <begin position="2253"/>
        <end position="2495"/>
    </location>
</feature>
<feature type="compositionally biased region" description="Polar residues" evidence="7">
    <location>
        <begin position="1768"/>
        <end position="1790"/>
    </location>
</feature>
<feature type="active site" description="Nucleophile; for transacylase activity" evidence="1">
    <location>
        <position position="140"/>
    </location>
</feature>
<feature type="active site" description="Proton donor/acceptor; for transacylase activity" evidence="1">
    <location>
        <position position="258"/>
    </location>
</feature>
<feature type="active site" description="For beta-ketoacyl synthase activity" evidence="5">
    <location>
        <position position="561"/>
    </location>
</feature>
<feature type="active site" description="For beta-ketoacyl synthase activity" evidence="5">
    <location>
        <position position="696"/>
    </location>
</feature>
<feature type="active site" description="For beta-ketoacyl synthase activity" evidence="5">
    <location>
        <position position="737"/>
    </location>
</feature>
<feature type="modified residue" description="O-(pantetheine 4'-phosphoryl)serine" evidence="4">
    <location>
        <position position="1718"/>
    </location>
</feature>
<dbReference type="EC" id="2.3.1.-" evidence="9"/>
<dbReference type="EMBL" id="GL985056">
    <property type="protein sequence ID" value="EGR52182.1"/>
    <property type="molecule type" value="Genomic_DNA"/>
</dbReference>
<dbReference type="RefSeq" id="XP_006961156.1">
    <property type="nucleotide sequence ID" value="XM_006961094.1"/>
</dbReference>
<dbReference type="SMR" id="G0R6S9"/>
<dbReference type="STRING" id="431241.G0R6S9"/>
<dbReference type="EnsemblFungi" id="EGR52182">
    <property type="protein sequence ID" value="EGR52182"/>
    <property type="gene ID" value="TRIREDRAFT_73621"/>
</dbReference>
<dbReference type="GeneID" id="18488220"/>
<dbReference type="KEGG" id="tre:TRIREDRAFT_73621"/>
<dbReference type="VEuPathDB" id="FungiDB:TRIREDRAFT_73621"/>
<dbReference type="eggNOG" id="KOG1202">
    <property type="taxonomic scope" value="Eukaryota"/>
</dbReference>
<dbReference type="HOGENOM" id="CLU_000022_6_2_1"/>
<dbReference type="OrthoDB" id="329835at2759"/>
<dbReference type="Proteomes" id="UP000008984">
    <property type="component" value="Unassembled WGS sequence"/>
</dbReference>
<dbReference type="GO" id="GO:0004315">
    <property type="term" value="F:3-oxoacyl-[acyl-carrier-protein] synthase activity"/>
    <property type="evidence" value="ECO:0007669"/>
    <property type="project" value="InterPro"/>
</dbReference>
<dbReference type="GO" id="GO:0008168">
    <property type="term" value="F:methyltransferase activity"/>
    <property type="evidence" value="ECO:0007669"/>
    <property type="project" value="UniProtKB-KW"/>
</dbReference>
<dbReference type="GO" id="GO:0006633">
    <property type="term" value="P:fatty acid biosynthetic process"/>
    <property type="evidence" value="ECO:0007669"/>
    <property type="project" value="InterPro"/>
</dbReference>
<dbReference type="GO" id="GO:0032259">
    <property type="term" value="P:methylation"/>
    <property type="evidence" value="ECO:0007669"/>
    <property type="project" value="UniProtKB-KW"/>
</dbReference>
<dbReference type="CDD" id="cd02440">
    <property type="entry name" value="AdoMet_MTases"/>
    <property type="match status" value="1"/>
</dbReference>
<dbReference type="CDD" id="cd00833">
    <property type="entry name" value="PKS"/>
    <property type="match status" value="1"/>
</dbReference>
<dbReference type="Gene3D" id="3.30.70.3290">
    <property type="match status" value="1"/>
</dbReference>
<dbReference type="Gene3D" id="3.40.47.10">
    <property type="match status" value="1"/>
</dbReference>
<dbReference type="Gene3D" id="1.10.1200.10">
    <property type="entry name" value="ACP-like"/>
    <property type="match status" value="1"/>
</dbReference>
<dbReference type="Gene3D" id="3.40.366.10">
    <property type="entry name" value="Malonyl-Coenzyme A Acyl Carrier Protein, domain 2"/>
    <property type="match status" value="2"/>
</dbReference>
<dbReference type="Gene3D" id="3.40.50.720">
    <property type="entry name" value="NAD(P)-binding Rossmann-like Domain"/>
    <property type="match status" value="1"/>
</dbReference>
<dbReference type="Gene3D" id="3.10.129.110">
    <property type="entry name" value="Polyketide synthase dehydratase"/>
    <property type="match status" value="1"/>
</dbReference>
<dbReference type="Gene3D" id="3.40.50.150">
    <property type="entry name" value="Vaccinia Virus protein VP39"/>
    <property type="match status" value="1"/>
</dbReference>
<dbReference type="InterPro" id="IPR001227">
    <property type="entry name" value="Ac_transferase_dom_sf"/>
</dbReference>
<dbReference type="InterPro" id="IPR036736">
    <property type="entry name" value="ACP-like_sf"/>
</dbReference>
<dbReference type="InterPro" id="IPR014043">
    <property type="entry name" value="Acyl_transferase_dom"/>
</dbReference>
<dbReference type="InterPro" id="IPR016035">
    <property type="entry name" value="Acyl_Trfase/lysoPLipase"/>
</dbReference>
<dbReference type="InterPro" id="IPR013120">
    <property type="entry name" value="Far_NAD-bd"/>
</dbReference>
<dbReference type="InterPro" id="IPR018201">
    <property type="entry name" value="Ketoacyl_synth_AS"/>
</dbReference>
<dbReference type="InterPro" id="IPR014031">
    <property type="entry name" value="Ketoacyl_synth_C"/>
</dbReference>
<dbReference type="InterPro" id="IPR014030">
    <property type="entry name" value="Ketoacyl_synth_N"/>
</dbReference>
<dbReference type="InterPro" id="IPR016036">
    <property type="entry name" value="Malonyl_transacylase_ACP-bd"/>
</dbReference>
<dbReference type="InterPro" id="IPR013217">
    <property type="entry name" value="Methyltransf_12"/>
</dbReference>
<dbReference type="InterPro" id="IPR036291">
    <property type="entry name" value="NAD(P)-bd_dom_sf"/>
</dbReference>
<dbReference type="InterPro" id="IPR020841">
    <property type="entry name" value="PKS_Beta-ketoAc_synthase_dom"/>
</dbReference>
<dbReference type="InterPro" id="IPR042104">
    <property type="entry name" value="PKS_dehydratase_sf"/>
</dbReference>
<dbReference type="InterPro" id="IPR049900">
    <property type="entry name" value="PKS_mFAS_DH"/>
</dbReference>
<dbReference type="InterPro" id="IPR050444">
    <property type="entry name" value="Polyketide_Synthase"/>
</dbReference>
<dbReference type="InterPro" id="IPR009081">
    <property type="entry name" value="PP-bd_ACP"/>
</dbReference>
<dbReference type="InterPro" id="IPR006162">
    <property type="entry name" value="Ppantetheine_attach_site"/>
</dbReference>
<dbReference type="InterPro" id="IPR029063">
    <property type="entry name" value="SAM-dependent_MTases_sf"/>
</dbReference>
<dbReference type="InterPro" id="IPR032088">
    <property type="entry name" value="SAT"/>
</dbReference>
<dbReference type="InterPro" id="IPR016039">
    <property type="entry name" value="Thiolase-like"/>
</dbReference>
<dbReference type="PANTHER" id="PTHR45681:SF6">
    <property type="entry name" value="POLYKETIDE SYNTHASE 37"/>
    <property type="match status" value="1"/>
</dbReference>
<dbReference type="PANTHER" id="PTHR45681">
    <property type="entry name" value="POLYKETIDE SYNTHASE 44-RELATED"/>
    <property type="match status" value="1"/>
</dbReference>
<dbReference type="Pfam" id="PF00698">
    <property type="entry name" value="Acyl_transf_1"/>
    <property type="match status" value="1"/>
</dbReference>
<dbReference type="Pfam" id="PF18558">
    <property type="entry name" value="HTH_51"/>
    <property type="match status" value="1"/>
</dbReference>
<dbReference type="Pfam" id="PF00109">
    <property type="entry name" value="ketoacyl-synt"/>
    <property type="match status" value="1"/>
</dbReference>
<dbReference type="Pfam" id="PF02801">
    <property type="entry name" value="Ketoacyl-synt_C"/>
    <property type="match status" value="1"/>
</dbReference>
<dbReference type="Pfam" id="PF08242">
    <property type="entry name" value="Methyltransf_12"/>
    <property type="match status" value="1"/>
</dbReference>
<dbReference type="Pfam" id="PF07993">
    <property type="entry name" value="NAD_binding_4"/>
    <property type="match status" value="1"/>
</dbReference>
<dbReference type="Pfam" id="PF00550">
    <property type="entry name" value="PP-binding"/>
    <property type="match status" value="1"/>
</dbReference>
<dbReference type="Pfam" id="PF16073">
    <property type="entry name" value="SAT"/>
    <property type="match status" value="1"/>
</dbReference>
<dbReference type="SMART" id="SM00827">
    <property type="entry name" value="PKS_AT"/>
    <property type="match status" value="1"/>
</dbReference>
<dbReference type="SMART" id="SM00825">
    <property type="entry name" value="PKS_KS"/>
    <property type="match status" value="1"/>
</dbReference>
<dbReference type="SUPFAM" id="SSF47336">
    <property type="entry name" value="ACP-like"/>
    <property type="match status" value="1"/>
</dbReference>
<dbReference type="SUPFAM" id="SSF52151">
    <property type="entry name" value="FabD/lysophospholipase-like"/>
    <property type="match status" value="1"/>
</dbReference>
<dbReference type="SUPFAM" id="SSF51735">
    <property type="entry name" value="NAD(P)-binding Rossmann-fold domains"/>
    <property type="match status" value="1"/>
</dbReference>
<dbReference type="SUPFAM" id="SSF55048">
    <property type="entry name" value="Probable ACP-binding domain of malonyl-CoA ACP transacylase"/>
    <property type="match status" value="1"/>
</dbReference>
<dbReference type="SUPFAM" id="SSF53335">
    <property type="entry name" value="S-adenosyl-L-methionine-dependent methyltransferases"/>
    <property type="match status" value="1"/>
</dbReference>
<dbReference type="SUPFAM" id="SSF53901">
    <property type="entry name" value="Thiolase-like"/>
    <property type="match status" value="1"/>
</dbReference>
<dbReference type="PROSITE" id="PS50075">
    <property type="entry name" value="CARRIER"/>
    <property type="match status" value="1"/>
</dbReference>
<dbReference type="PROSITE" id="PS00606">
    <property type="entry name" value="KS3_1"/>
    <property type="match status" value="1"/>
</dbReference>
<dbReference type="PROSITE" id="PS52004">
    <property type="entry name" value="KS3_2"/>
    <property type="match status" value="1"/>
</dbReference>
<dbReference type="PROSITE" id="PS00012">
    <property type="entry name" value="PHOSPHOPANTETHEINE"/>
    <property type="match status" value="1"/>
</dbReference>
<dbReference type="PROSITE" id="PS52019">
    <property type="entry name" value="PKS_MFAS_DH"/>
    <property type="match status" value="1"/>
</dbReference>
<name>SORB_HYPJQ</name>
<protein>
    <recommendedName>
        <fullName evidence="10">Non-reducing polyketide synthase sor2</fullName>
        <shortName evidence="11">NR-PKS sor2</shortName>
        <ecNumber evidence="9">2.3.1.-</ecNumber>
    </recommendedName>
    <alternativeName>
        <fullName evidence="10">Sorbicillinoid biosynthetic cluster protein 2</fullName>
    </alternativeName>
</protein>
<reference key="1">
    <citation type="journal article" date="2008" name="Nat. Biotechnol.">
        <title>Genome sequencing and analysis of the biomass-degrading fungus Trichoderma reesei (syn. Hypocrea jecorina).</title>
        <authorList>
            <person name="Martinez D."/>
            <person name="Berka R.M."/>
            <person name="Henrissat B."/>
            <person name="Saloheimo M."/>
            <person name="Arvas M."/>
            <person name="Baker S.E."/>
            <person name="Chapman J."/>
            <person name="Chertkov O."/>
            <person name="Coutinho P.M."/>
            <person name="Cullen D."/>
            <person name="Danchin E.G."/>
            <person name="Grigoriev I.V."/>
            <person name="Harris P."/>
            <person name="Jackson M."/>
            <person name="Kubicek C.P."/>
            <person name="Han C.S."/>
            <person name="Ho I."/>
            <person name="Larrondo L.F."/>
            <person name="de Leon A.L."/>
            <person name="Magnuson J.K."/>
            <person name="Merino S."/>
            <person name="Misra M."/>
            <person name="Nelson B."/>
            <person name="Putnam N."/>
            <person name="Robbertse B."/>
            <person name="Salamov A.A."/>
            <person name="Schmoll M."/>
            <person name="Terry A."/>
            <person name="Thayer N."/>
            <person name="Westerholm-Parvinen A."/>
            <person name="Schoch C.L."/>
            <person name="Yao J."/>
            <person name="Barabote R."/>
            <person name="Nelson M.A."/>
            <person name="Detter C."/>
            <person name="Bruce D."/>
            <person name="Kuske C.R."/>
            <person name="Xie G."/>
            <person name="Richardson P."/>
            <person name="Rokhsar D.S."/>
            <person name="Lucas S.M."/>
            <person name="Rubin E.M."/>
            <person name="Dunn-Coleman N."/>
            <person name="Ward M."/>
            <person name="Brettin T.S."/>
        </authorList>
    </citation>
    <scope>NUCLEOTIDE SEQUENCE [LARGE SCALE GENOMIC DNA]</scope>
    <source>
        <strain>QM6a</strain>
    </source>
</reference>
<reference key="2">
    <citation type="journal article" date="2016" name="BMC Evol. Biol.">
        <title>Several steps of lateral gene transfer followed by events of 'birth-and-death' evolution shaped a fungal sorbicillinoid biosynthetic gene cluster.</title>
        <authorList>
            <person name="Druzhinina I.S."/>
            <person name="Kubicek E.M."/>
            <person name="Kubicek C.P."/>
        </authorList>
    </citation>
    <scope>IDENTIFICATION</scope>
</reference>
<reference key="3">
    <citation type="journal article" date="2017" name="Front. Microbiol.">
        <title>In vivo study of the sorbicillinoid gene cluster in Trichoderma reesei.</title>
        <authorList>
            <person name="Derntl C."/>
            <person name="Guzman-Chavez F."/>
            <person name="Mello-de-Sousa T.M."/>
            <person name="Busse H.J."/>
            <person name="Driessen A.J.M."/>
            <person name="Mach R.L."/>
            <person name="Mach-Aigner A.R."/>
        </authorList>
    </citation>
    <scope>FUNCTION</scope>
</reference>
<reference key="4">
    <citation type="journal article" date="2017" name="PLoS ONE">
        <title>A CRE1-regulated cluster is responsible for light dependent production of dihydrotrichotetronin in Trichoderma reesei.</title>
        <authorList>
            <person name="Monroy A.A."/>
            <person name="Stappler E."/>
            <person name="Schuster A."/>
            <person name="Sulyok M."/>
            <person name="Schmoll M."/>
        </authorList>
    </citation>
    <scope>FUNCTION</scope>
    <scope>INDUCTION</scope>
    <scope>DISRUPTION PHENOTYPE</scope>
    <scope>PATHWAY</scope>
</reference>